<keyword id="KW-0687">Ribonucleoprotein</keyword>
<keyword id="KW-0689">Ribosomal protein</keyword>
<keyword id="KW-0694">RNA-binding</keyword>
<keyword id="KW-0699">rRNA-binding</keyword>
<sequence length="100" mass="11317">MIREERLLKVLRAPHVSEKASTAMEKHNTIVLKVAKDATKAEIKAAVHKLFEVEVNDVRTLVVKGKTKRHGQRIGRRSDWKKAYVTLKEGQNLDFIGGAE</sequence>
<organism>
    <name type="scientific">Sodalis glossinidius (strain morsitans)</name>
    <dbReference type="NCBI Taxonomy" id="343509"/>
    <lineage>
        <taxon>Bacteria</taxon>
        <taxon>Pseudomonadati</taxon>
        <taxon>Pseudomonadota</taxon>
        <taxon>Gammaproteobacteria</taxon>
        <taxon>Enterobacterales</taxon>
        <taxon>Bruguierivoracaceae</taxon>
        <taxon>Sodalis</taxon>
    </lineage>
</organism>
<comment type="function">
    <text evidence="1">One of the early assembly proteins it binds 23S rRNA. One of the proteins that surrounds the polypeptide exit tunnel on the outside of the ribosome. Forms the main docking site for trigger factor binding to the ribosome.</text>
</comment>
<comment type="subunit">
    <text evidence="1">Part of the 50S ribosomal subunit. Contacts protein L29, and trigger factor when it is bound to the ribosome.</text>
</comment>
<comment type="similarity">
    <text evidence="1">Belongs to the universal ribosomal protein uL23 family.</text>
</comment>
<accession>Q2NQM4</accession>
<dbReference type="EMBL" id="AP008232">
    <property type="protein sequence ID" value="BAE75551.1"/>
    <property type="molecule type" value="Genomic_DNA"/>
</dbReference>
<dbReference type="RefSeq" id="WP_011412086.1">
    <property type="nucleotide sequence ID" value="NZ_LN854557.1"/>
</dbReference>
<dbReference type="SMR" id="Q2NQM4"/>
<dbReference type="STRING" id="343509.SG2276"/>
<dbReference type="KEGG" id="sgl:SG2276"/>
<dbReference type="eggNOG" id="COG0089">
    <property type="taxonomic scope" value="Bacteria"/>
</dbReference>
<dbReference type="HOGENOM" id="CLU_037562_3_1_6"/>
<dbReference type="OrthoDB" id="9793353at2"/>
<dbReference type="BioCyc" id="SGLO343509:SGP1_RS20830-MONOMER"/>
<dbReference type="Proteomes" id="UP000001932">
    <property type="component" value="Chromosome"/>
</dbReference>
<dbReference type="GO" id="GO:1990904">
    <property type="term" value="C:ribonucleoprotein complex"/>
    <property type="evidence" value="ECO:0007669"/>
    <property type="project" value="UniProtKB-KW"/>
</dbReference>
<dbReference type="GO" id="GO:0005840">
    <property type="term" value="C:ribosome"/>
    <property type="evidence" value="ECO:0007669"/>
    <property type="project" value="UniProtKB-KW"/>
</dbReference>
<dbReference type="GO" id="GO:0019843">
    <property type="term" value="F:rRNA binding"/>
    <property type="evidence" value="ECO:0007669"/>
    <property type="project" value="UniProtKB-UniRule"/>
</dbReference>
<dbReference type="GO" id="GO:0003735">
    <property type="term" value="F:structural constituent of ribosome"/>
    <property type="evidence" value="ECO:0007669"/>
    <property type="project" value="InterPro"/>
</dbReference>
<dbReference type="GO" id="GO:0006412">
    <property type="term" value="P:translation"/>
    <property type="evidence" value="ECO:0007669"/>
    <property type="project" value="UniProtKB-UniRule"/>
</dbReference>
<dbReference type="FunFam" id="3.30.70.330:FF:000001">
    <property type="entry name" value="50S ribosomal protein L23"/>
    <property type="match status" value="1"/>
</dbReference>
<dbReference type="Gene3D" id="3.30.70.330">
    <property type="match status" value="1"/>
</dbReference>
<dbReference type="HAMAP" id="MF_01369_B">
    <property type="entry name" value="Ribosomal_uL23_B"/>
    <property type="match status" value="1"/>
</dbReference>
<dbReference type="InterPro" id="IPR012677">
    <property type="entry name" value="Nucleotide-bd_a/b_plait_sf"/>
</dbReference>
<dbReference type="InterPro" id="IPR013025">
    <property type="entry name" value="Ribosomal_uL23-like"/>
</dbReference>
<dbReference type="InterPro" id="IPR012678">
    <property type="entry name" value="Ribosomal_uL23/eL15/eS24_sf"/>
</dbReference>
<dbReference type="InterPro" id="IPR001014">
    <property type="entry name" value="Ribosomal_uL23_CS"/>
</dbReference>
<dbReference type="NCBIfam" id="NF004358">
    <property type="entry name" value="PRK05738.1-1"/>
    <property type="match status" value="1"/>
</dbReference>
<dbReference type="NCBIfam" id="NF004359">
    <property type="entry name" value="PRK05738.1-3"/>
    <property type="match status" value="1"/>
</dbReference>
<dbReference type="NCBIfam" id="NF004363">
    <property type="entry name" value="PRK05738.2-4"/>
    <property type="match status" value="1"/>
</dbReference>
<dbReference type="NCBIfam" id="NF004366">
    <property type="entry name" value="PRK05738.3-2"/>
    <property type="match status" value="1"/>
</dbReference>
<dbReference type="PANTHER" id="PTHR11620">
    <property type="entry name" value="60S RIBOSOMAL PROTEIN L23A"/>
    <property type="match status" value="1"/>
</dbReference>
<dbReference type="Pfam" id="PF00276">
    <property type="entry name" value="Ribosomal_L23"/>
    <property type="match status" value="1"/>
</dbReference>
<dbReference type="SUPFAM" id="SSF54189">
    <property type="entry name" value="Ribosomal proteins S24e, L23 and L15e"/>
    <property type="match status" value="1"/>
</dbReference>
<dbReference type="PROSITE" id="PS00050">
    <property type="entry name" value="RIBOSOMAL_L23"/>
    <property type="match status" value="1"/>
</dbReference>
<feature type="chain" id="PRO_0000272849" description="Large ribosomal subunit protein uL23">
    <location>
        <begin position="1"/>
        <end position="100"/>
    </location>
</feature>
<protein>
    <recommendedName>
        <fullName evidence="1">Large ribosomal subunit protein uL23</fullName>
    </recommendedName>
    <alternativeName>
        <fullName evidence="2">50S ribosomal protein L23</fullName>
    </alternativeName>
</protein>
<proteinExistence type="inferred from homology"/>
<name>RL23_SODGM</name>
<reference key="1">
    <citation type="journal article" date="2006" name="Genome Res.">
        <title>Massive genome erosion and functional adaptations provide insights into the symbiotic lifestyle of Sodalis glossinidius in the tsetse host.</title>
        <authorList>
            <person name="Toh H."/>
            <person name="Weiss B.L."/>
            <person name="Perkin S.A.H."/>
            <person name="Yamashita A."/>
            <person name="Oshima K."/>
            <person name="Hattori M."/>
            <person name="Aksoy S."/>
        </authorList>
    </citation>
    <scope>NUCLEOTIDE SEQUENCE [LARGE SCALE GENOMIC DNA]</scope>
    <source>
        <strain>morsitans</strain>
    </source>
</reference>
<evidence type="ECO:0000255" key="1">
    <source>
        <dbReference type="HAMAP-Rule" id="MF_01369"/>
    </source>
</evidence>
<evidence type="ECO:0000305" key="2"/>
<gene>
    <name evidence="1" type="primary">rplW</name>
    <name type="ordered locus">SG2276</name>
</gene>